<comment type="function">
    <text evidence="5">Binds phosphatidic acid. Protein tyrosine phosphatase that also exhibits lipid phosphatase activity. Hydrolyzed poorly p-nitrophenyl phosphate (p-NPP). Can use PtdIns isomers as substrates. Removes efficiently phosphate from the D3 position of the inositol ring, less from the D4 position and not at all from the D5 position on monophosphorylated PtdIns isomers (PIPs). The presence of a phosphate group in the D5 position on PIP(2) isomers reduces lipid phosphatase activity. Mostly active on PtdIns(3)P and PtdIns(3,4)P(2), to a lower extent, on PtdIns(4)P and PtdIns(3,5)P(2), but barely against PtdIns(3,4,5)P(3) as substrate.</text>
</comment>
<comment type="catalytic activity">
    <reaction evidence="3 5">
        <text>O-phospho-L-tyrosyl-[protein] + H2O = L-tyrosyl-[protein] + phosphate</text>
        <dbReference type="Rhea" id="RHEA:10684"/>
        <dbReference type="Rhea" id="RHEA-COMP:10136"/>
        <dbReference type="Rhea" id="RHEA-COMP:20101"/>
        <dbReference type="ChEBI" id="CHEBI:15377"/>
        <dbReference type="ChEBI" id="CHEBI:43474"/>
        <dbReference type="ChEBI" id="CHEBI:46858"/>
        <dbReference type="ChEBI" id="CHEBI:61978"/>
        <dbReference type="EC" id="3.1.3.48"/>
    </reaction>
</comment>
<comment type="catalytic activity">
    <reaction>
        <text>a 1,2-diacyl-sn-glycero-3-phospho-(1D-myo-inositol-3,4,5-trisphosphate) + H2O = a 1,2-diacyl-sn-glycero-3-phospho-(1D-myo-inositol-4,5-bisphosphate) + phosphate</text>
        <dbReference type="Rhea" id="RHEA:25017"/>
        <dbReference type="ChEBI" id="CHEBI:15377"/>
        <dbReference type="ChEBI" id="CHEBI:43474"/>
        <dbReference type="ChEBI" id="CHEBI:57836"/>
        <dbReference type="ChEBI" id="CHEBI:58456"/>
        <dbReference type="EC" id="3.1.3.67"/>
    </reaction>
</comment>
<comment type="biophysicochemical properties">
    <kinetics>
        <KM evidence="5">8.5 mM for p-NPP</KM>
        <Vmax evidence="5">206.0 nmol/min/mg enzyme with p-NPP as substrate</Vmax>
    </kinetics>
</comment>
<comment type="tissue specificity">
    <text evidence="5">Expressed in seedlings, roots, stems, leaves, flowers and siliques. However, at protein level, not observed in older leaves and mature siliques.</text>
</comment>
<comment type="induction">
    <text evidence="5">Accumulates in response to salt (e.g. NaCl) and osmotic stresses (e.g. mannitol).</text>
</comment>
<comment type="similarity">
    <text evidence="10">Belongs to the PTEN phosphatase protein family.</text>
</comment>
<protein>
    <recommendedName>
        <fullName evidence="9">Phosphatidylinositol 3,4,5-trisphosphate 3-phosphatase and protein-tyrosine-phosphatase PTEN2A</fullName>
        <ecNumber evidence="3 5">3.1.3.48</ecNumber>
        <ecNumber evidence="5">3.1.3.67</ecNumber>
    </recommendedName>
    <alternativeName>
        <fullName evidence="8">Protein PHOSPHATASE AND TENSIN HOMOLOG 2-a</fullName>
        <shortName evidence="7">AtPTEN2</shortName>
        <shortName evidence="8">AtPTEN2a</shortName>
    </alternativeName>
</protein>
<evidence type="ECO:0000255" key="1">
    <source>
        <dbReference type="PROSITE-ProRule" id="PRU00589"/>
    </source>
</evidence>
<evidence type="ECO:0000255" key="2">
    <source>
        <dbReference type="PROSITE-ProRule" id="PRU00590"/>
    </source>
</evidence>
<evidence type="ECO:0000255" key="3">
    <source>
        <dbReference type="PROSITE-ProRule" id="PRU10044"/>
    </source>
</evidence>
<evidence type="ECO:0000256" key="4">
    <source>
        <dbReference type="SAM" id="MobiDB-lite"/>
    </source>
</evidence>
<evidence type="ECO:0000269" key="5">
    <source>
    </source>
</evidence>
<evidence type="ECO:0000303" key="6">
    <source>
    </source>
</evidence>
<evidence type="ECO:0000303" key="7">
    <source>
    </source>
</evidence>
<evidence type="ECO:0000303" key="8">
    <source>
    </source>
</evidence>
<evidence type="ECO:0000305" key="9"/>
<evidence type="ECO:0000305" key="10">
    <source>
    </source>
</evidence>
<evidence type="ECO:0000312" key="11">
    <source>
        <dbReference type="Araport" id="AT3G19420"/>
    </source>
</evidence>
<evidence type="ECO:0007744" key="12">
    <source>
    </source>
</evidence>
<keyword id="KW-0378">Hydrolase</keyword>
<keyword id="KW-0443">Lipid metabolism</keyword>
<keyword id="KW-1208">Phospholipid metabolism</keyword>
<keyword id="KW-0597">Phosphoprotein</keyword>
<keyword id="KW-0904">Protein phosphatase</keyword>
<keyword id="KW-1185">Reference proteome</keyword>
<sequence length="611" mass="66430">MSSESPNLPAAAGTVPDNHPPPPPVVTAAEAGSDDSPKGVASKLSAAGISNWAKNLKVPQPFASTQNDSGVENTEKSAFAKFTSGLGIRLSPKSPQTNDTTTEGTSSATESSFIGTITKGLVDTSKNAVKAVQVKARHAVSQNKRRYQEGGFDLDLTYITENIIAMGFPAGDMSSGFFGYVEGFYRNQMEEVINFLETQHKGKYKVYNLCSERLYDVSLFEGKVASFPFDDHNCPPIHLVTSFCQSAYSWLKEDIENVVVVHCKAGMARTGLMICSLLLYLKFFPTAEECMDFYNQKRCVDGKGLVLPSQIRYVKYFERILTYFNGENQPGRRCMLRGFRLHRCPYWIRPSITISDHNGVLFTTKKHPRTKDLSPEDFWFSAPKKGVMVFALPGEPGLTELAGDFKIQFHDRQGDFYCWLNTTMMENRVILKTSELDGFDKRKLPSPGFMVEVVLADINATIPTNPSSETASKTPEETSAANSSPVDGSASVPGPDKETENPDKDDVFSDNEGDSTGPTKTTSSASSQTPEAKKSADETAVLTKATEKVSISGNKGSSQPVQGVTVSKGEATEKPSGAGVNASSSSESEFKVMAADASVFSFGDEDDFESD</sequence>
<organism>
    <name type="scientific">Arabidopsis thaliana</name>
    <name type="common">Mouse-ear cress</name>
    <dbReference type="NCBI Taxonomy" id="3702"/>
    <lineage>
        <taxon>Eukaryota</taxon>
        <taxon>Viridiplantae</taxon>
        <taxon>Streptophyta</taxon>
        <taxon>Embryophyta</taxon>
        <taxon>Tracheophyta</taxon>
        <taxon>Spermatophyta</taxon>
        <taxon>Magnoliopsida</taxon>
        <taxon>eudicotyledons</taxon>
        <taxon>Gunneridae</taxon>
        <taxon>Pentapetalae</taxon>
        <taxon>rosids</taxon>
        <taxon>malvids</taxon>
        <taxon>Brassicales</taxon>
        <taxon>Brassicaceae</taxon>
        <taxon>Camelineae</taxon>
        <taxon>Arabidopsis</taxon>
    </lineage>
</organism>
<name>PTN2A_ARATH</name>
<gene>
    <name evidence="8" type="primary">PTEN2A</name>
    <name evidence="7" type="synonym">PTEN2</name>
    <name evidence="11" type="ordered locus">At3g19420</name>
    <name evidence="6" type="ORF">MLD14.15</name>
</gene>
<proteinExistence type="evidence at protein level"/>
<reference key="1">
    <citation type="submission" date="2000-05" db="EMBL/GenBank/DDBJ databases">
        <title>Cloning and functional analysis of a plant PTEN-like protein.</title>
        <authorList>
            <person name="Elge S."/>
            <person name="Mueller-Roeber B."/>
        </authorList>
    </citation>
    <scope>NUCLEOTIDE SEQUENCE [MRNA]</scope>
    <source>
        <strain>cv. C24</strain>
    </source>
</reference>
<reference key="2">
    <citation type="journal article" date="2000" name="DNA Res.">
        <title>Structural analysis of Arabidopsis thaliana chromosome 3. I. Sequence features of the regions of 4,504,864 bp covered by sixty P1 and TAC clones.</title>
        <authorList>
            <person name="Sato S."/>
            <person name="Nakamura Y."/>
            <person name="Kaneko T."/>
            <person name="Katoh T."/>
            <person name="Asamizu E."/>
            <person name="Tabata S."/>
        </authorList>
    </citation>
    <scope>NUCLEOTIDE SEQUENCE [LARGE SCALE GENOMIC DNA]</scope>
    <source>
        <strain>cv. Columbia</strain>
    </source>
</reference>
<reference key="3">
    <citation type="journal article" date="2017" name="Plant J.">
        <title>Araport11: a complete reannotation of the Arabidopsis thaliana reference genome.</title>
        <authorList>
            <person name="Cheng C.Y."/>
            <person name="Krishnakumar V."/>
            <person name="Chan A.P."/>
            <person name="Thibaud-Nissen F."/>
            <person name="Schobel S."/>
            <person name="Town C.D."/>
        </authorList>
    </citation>
    <scope>GENOME REANNOTATION</scope>
    <source>
        <strain>cv. Columbia</strain>
    </source>
</reference>
<reference key="4">
    <citation type="journal article" date="2003" name="Science">
        <title>Empirical analysis of transcriptional activity in the Arabidopsis genome.</title>
        <authorList>
            <person name="Yamada K."/>
            <person name="Lim J."/>
            <person name="Dale J.M."/>
            <person name="Chen H."/>
            <person name="Shinn P."/>
            <person name="Palm C.J."/>
            <person name="Southwick A.M."/>
            <person name="Wu H.C."/>
            <person name="Kim C.J."/>
            <person name="Nguyen M."/>
            <person name="Pham P.K."/>
            <person name="Cheuk R.F."/>
            <person name="Karlin-Newmann G."/>
            <person name="Liu S.X."/>
            <person name="Lam B."/>
            <person name="Sakano H."/>
            <person name="Wu T."/>
            <person name="Yu G."/>
            <person name="Miranda M."/>
            <person name="Quach H.L."/>
            <person name="Tripp M."/>
            <person name="Chang C.H."/>
            <person name="Lee J.M."/>
            <person name="Toriumi M.J."/>
            <person name="Chan M.M."/>
            <person name="Tang C.C."/>
            <person name="Onodera C.S."/>
            <person name="Deng J.M."/>
            <person name="Akiyama K."/>
            <person name="Ansari Y."/>
            <person name="Arakawa T."/>
            <person name="Banh J."/>
            <person name="Banno F."/>
            <person name="Bowser L."/>
            <person name="Brooks S.Y."/>
            <person name="Carninci P."/>
            <person name="Chao Q."/>
            <person name="Choy N."/>
            <person name="Enju A."/>
            <person name="Goldsmith A.D."/>
            <person name="Gurjal M."/>
            <person name="Hansen N.F."/>
            <person name="Hayashizaki Y."/>
            <person name="Johnson-Hopson C."/>
            <person name="Hsuan V.W."/>
            <person name="Iida K."/>
            <person name="Karnes M."/>
            <person name="Khan S."/>
            <person name="Koesema E."/>
            <person name="Ishida J."/>
            <person name="Jiang P.X."/>
            <person name="Jones T."/>
            <person name="Kawai J."/>
            <person name="Kamiya A."/>
            <person name="Meyers C."/>
            <person name="Nakajima M."/>
            <person name="Narusaka M."/>
            <person name="Seki M."/>
            <person name="Sakurai T."/>
            <person name="Satou M."/>
            <person name="Tamse R."/>
            <person name="Vaysberg M."/>
            <person name="Wallender E.K."/>
            <person name="Wong C."/>
            <person name="Yamamura Y."/>
            <person name="Yuan S."/>
            <person name="Shinozaki K."/>
            <person name="Davis R.W."/>
            <person name="Theologis A."/>
            <person name="Ecker J.R."/>
        </authorList>
    </citation>
    <scope>NUCLEOTIDE SEQUENCE [LARGE SCALE MRNA]</scope>
    <source>
        <strain>cv. Columbia</strain>
    </source>
</reference>
<reference key="5">
    <citation type="journal article" date="2002" name="Plant Cell">
        <title>A tumor suppressor homolog, AtPTEN1, is essential for pollen development in Arabidopsis.</title>
        <authorList>
            <person name="Gupta R."/>
            <person name="Ting J.T.L."/>
            <person name="Sokolov L.N."/>
            <person name="Johnson S.A."/>
            <person name="Luan S."/>
        </authorList>
    </citation>
    <scope>NOMENCLATURE</scope>
</reference>
<reference key="6">
    <citation type="journal article" date="2009" name="Plant Physiol.">
        <title>Large-scale Arabidopsis phosphoproteome profiling reveals novel chloroplast kinase substrates and phosphorylation networks.</title>
        <authorList>
            <person name="Reiland S."/>
            <person name="Messerli G."/>
            <person name="Baerenfaller K."/>
            <person name="Gerrits B."/>
            <person name="Endler A."/>
            <person name="Grossmann J."/>
            <person name="Gruissem W."/>
            <person name="Baginsky S."/>
        </authorList>
    </citation>
    <scope>PHOSPHORYLATION [LARGE SCALE ANALYSIS] AT SER-91 AND SER-509</scope>
    <scope>IDENTIFICATION BY MASS SPECTROMETRY [LARGE SCALE ANALYSIS]</scope>
</reference>
<reference key="7">
    <citation type="journal article" date="2012" name="Biochem. J.">
        <title>A novel class of PTEN protein in Arabidopsis displays unusual phosphoinositide phosphatase activity and efficiently binds phosphatidic acid.</title>
        <authorList>
            <person name="Pribat A."/>
            <person name="Sormani R."/>
            <person name="Rousseau-Gueutin M."/>
            <person name="Julkowska M.M."/>
            <person name="Testerink C."/>
            <person name="Joubes J."/>
            <person name="Castroviejo M."/>
            <person name="Laguerre M."/>
            <person name="Meyer C."/>
            <person name="Germain V."/>
            <person name="Rothan C."/>
        </authorList>
    </citation>
    <scope>FUNCTION</scope>
    <scope>MUTAGENESIS OF CYS-263 AND 267-MET-ALA-268</scope>
    <scope>CATALYTIC ACTIVITY</scope>
    <scope>BIOPHYSICOCHEMICAL PROPERTIES</scope>
    <scope>TISSUE SPECIFICITY</scope>
    <scope>INDUCTION BY SALT AND OSMOTIC STRESSES</scope>
    <scope>GENE FAMILY</scope>
    <scope>NOMENCLATURE</scope>
</reference>
<dbReference type="EC" id="3.1.3.48" evidence="3 5"/>
<dbReference type="EC" id="3.1.3.67" evidence="5"/>
<dbReference type="EMBL" id="AF268257">
    <property type="protein sequence ID" value="AAO13749.1"/>
    <property type="molecule type" value="mRNA"/>
</dbReference>
<dbReference type="EMBL" id="AB025624">
    <property type="protein sequence ID" value="BAB02466.1"/>
    <property type="molecule type" value="Genomic_DNA"/>
</dbReference>
<dbReference type="EMBL" id="CP002686">
    <property type="protein sequence ID" value="AEE76238.1"/>
    <property type="molecule type" value="Genomic_DNA"/>
</dbReference>
<dbReference type="EMBL" id="AY070042">
    <property type="protein sequence ID" value="AAL49799.1"/>
    <property type="molecule type" value="mRNA"/>
</dbReference>
<dbReference type="SMR" id="Q9LT75"/>
<dbReference type="FunCoup" id="Q9LT75">
    <property type="interactions" value="1883"/>
</dbReference>
<dbReference type="IntAct" id="Q9LT75">
    <property type="interactions" value="1"/>
</dbReference>
<dbReference type="STRING" id="3702.Q9LT75"/>
<dbReference type="iPTMnet" id="Q9LT75"/>
<dbReference type="PaxDb" id="3702-AT3G19420.1"/>
<dbReference type="ProteomicsDB" id="226419"/>
<dbReference type="EnsemblPlants" id="AT3G19420.1">
    <property type="protein sequence ID" value="AT3G19420.1"/>
    <property type="gene ID" value="AT3G19420"/>
</dbReference>
<dbReference type="GeneID" id="821476"/>
<dbReference type="Gramene" id="AT3G19420.1">
    <property type="protein sequence ID" value="AT3G19420.1"/>
    <property type="gene ID" value="AT3G19420"/>
</dbReference>
<dbReference type="KEGG" id="ath:AT3G19420"/>
<dbReference type="Araport" id="AT3G19420"/>
<dbReference type="TAIR" id="AT3G19420">
    <property type="gene designation" value="PEN2"/>
</dbReference>
<dbReference type="eggNOG" id="KOG2283">
    <property type="taxonomic scope" value="Eukaryota"/>
</dbReference>
<dbReference type="HOGENOM" id="CLU_021394_1_0_1"/>
<dbReference type="InParanoid" id="Q9LT75"/>
<dbReference type="OMA" id="PCPGFQV"/>
<dbReference type="PhylomeDB" id="Q9LT75"/>
<dbReference type="BioCyc" id="ARA:AT3G19420-MONOMER"/>
<dbReference type="SABIO-RK" id="Q9LT75"/>
<dbReference type="PRO" id="PR:Q9LT75"/>
<dbReference type="Proteomes" id="UP000006548">
    <property type="component" value="Chromosome 3"/>
</dbReference>
<dbReference type="ExpressionAtlas" id="Q9LT75">
    <property type="expression patterns" value="baseline and differential"/>
</dbReference>
<dbReference type="GO" id="GO:0070300">
    <property type="term" value="F:phosphatidic acid binding"/>
    <property type="evidence" value="ECO:0000314"/>
    <property type="project" value="TAIR"/>
</dbReference>
<dbReference type="GO" id="GO:0052866">
    <property type="term" value="F:phosphatidylinositol phosphate phosphatase activity"/>
    <property type="evidence" value="ECO:0000314"/>
    <property type="project" value="TAIR"/>
</dbReference>
<dbReference type="GO" id="GO:0016314">
    <property type="term" value="F:phosphatidylinositol-3,4,5-trisphosphate 3-phosphatase activity"/>
    <property type="evidence" value="ECO:0007669"/>
    <property type="project" value="UniProtKB-EC"/>
</dbReference>
<dbReference type="GO" id="GO:0004725">
    <property type="term" value="F:protein tyrosine phosphatase activity"/>
    <property type="evidence" value="ECO:0000314"/>
    <property type="project" value="UniProtKB"/>
</dbReference>
<dbReference type="GO" id="GO:0035335">
    <property type="term" value="P:peptidyl-tyrosine dephosphorylation"/>
    <property type="evidence" value="ECO:0000314"/>
    <property type="project" value="TAIR"/>
</dbReference>
<dbReference type="GO" id="GO:0046856">
    <property type="term" value="P:phosphatidylinositol dephosphorylation"/>
    <property type="evidence" value="ECO:0000314"/>
    <property type="project" value="TAIR"/>
</dbReference>
<dbReference type="GO" id="GO:0006970">
    <property type="term" value="P:response to osmotic stress"/>
    <property type="evidence" value="ECO:0000270"/>
    <property type="project" value="UniProtKB"/>
</dbReference>
<dbReference type="GO" id="GO:0009651">
    <property type="term" value="P:response to salt stress"/>
    <property type="evidence" value="ECO:0000270"/>
    <property type="project" value="UniProtKB"/>
</dbReference>
<dbReference type="CDD" id="cd14509">
    <property type="entry name" value="PTP_PTEN"/>
    <property type="match status" value="1"/>
</dbReference>
<dbReference type="FunFam" id="3.90.190.10:FF:000053">
    <property type="entry name" value="Phosphatidylinositol 3,4,5-trisphosphate 3-phosphatase TPTE2"/>
    <property type="match status" value="1"/>
</dbReference>
<dbReference type="Gene3D" id="2.60.40.1110">
    <property type="match status" value="1"/>
</dbReference>
<dbReference type="Gene3D" id="3.90.190.10">
    <property type="entry name" value="Protein tyrosine phosphatase superfamily"/>
    <property type="match status" value="1"/>
</dbReference>
<dbReference type="InterPro" id="IPR035892">
    <property type="entry name" value="C2_domain_sf"/>
</dbReference>
<dbReference type="InterPro" id="IPR051281">
    <property type="entry name" value="Dual-spec_lipid-protein_phosph"/>
</dbReference>
<dbReference type="InterPro" id="IPR029021">
    <property type="entry name" value="Prot-tyrosine_phosphatase-like"/>
</dbReference>
<dbReference type="InterPro" id="IPR055183">
    <property type="entry name" value="PTEN2A/B_C2"/>
</dbReference>
<dbReference type="InterPro" id="IPR045101">
    <property type="entry name" value="PTP_PTEN"/>
</dbReference>
<dbReference type="InterPro" id="IPR014020">
    <property type="entry name" value="Tensin_C2-dom"/>
</dbReference>
<dbReference type="InterPro" id="IPR029023">
    <property type="entry name" value="Tensin_phosphatase"/>
</dbReference>
<dbReference type="InterPro" id="IPR016130">
    <property type="entry name" value="Tyr_Pase_AS"/>
</dbReference>
<dbReference type="InterPro" id="IPR000387">
    <property type="entry name" value="Tyr_Pase_dom"/>
</dbReference>
<dbReference type="PANTHER" id="PTHR12305">
    <property type="entry name" value="PHOSPHATASE WITH HOMOLOGY TO TENSIN"/>
    <property type="match status" value="1"/>
</dbReference>
<dbReference type="PANTHER" id="PTHR12305:SF96">
    <property type="entry name" value="PHOSPHATIDYLINOSITOL 3,4,5-TRISPHOSPHATE 3-PHOSPHATASE AND PROTEIN-TYROSINE-PHOSPHATASE PTEN2A"/>
    <property type="match status" value="1"/>
</dbReference>
<dbReference type="Pfam" id="PF22918">
    <property type="entry name" value="PTEN2_C2"/>
    <property type="match status" value="1"/>
</dbReference>
<dbReference type="Pfam" id="PF22785">
    <property type="entry name" value="Tc-R-P"/>
    <property type="match status" value="1"/>
</dbReference>
<dbReference type="SMART" id="SM01326">
    <property type="entry name" value="PTEN_C2"/>
    <property type="match status" value="1"/>
</dbReference>
<dbReference type="SUPFAM" id="SSF52799">
    <property type="entry name" value="(Phosphotyrosine protein) phosphatases II"/>
    <property type="match status" value="1"/>
</dbReference>
<dbReference type="SUPFAM" id="SSF49562">
    <property type="entry name" value="C2 domain (Calcium/lipid-binding domain, CaLB)"/>
    <property type="match status" value="1"/>
</dbReference>
<dbReference type="PROSITE" id="PS51182">
    <property type="entry name" value="C2_TENSIN"/>
    <property type="match status" value="1"/>
</dbReference>
<dbReference type="PROSITE" id="PS51181">
    <property type="entry name" value="PPASE_TENSIN"/>
    <property type="match status" value="1"/>
</dbReference>
<dbReference type="PROSITE" id="PS00383">
    <property type="entry name" value="TYR_PHOSPHATASE_1"/>
    <property type="match status" value="1"/>
</dbReference>
<dbReference type="PROSITE" id="PS50056">
    <property type="entry name" value="TYR_PHOSPHATASE_2"/>
    <property type="match status" value="1"/>
</dbReference>
<accession>Q9LT75</accession>
<accession>Q8GZT8</accession>
<feature type="chain" id="PRO_0000435168" description="Phosphatidylinositol 3,4,5-trisphosphate 3-phosphatase and protein-tyrosine-phosphatase PTEN2A">
    <location>
        <begin position="1"/>
        <end position="611"/>
    </location>
</feature>
<feature type="domain" description="Phosphatase tensin-type" evidence="2">
    <location>
        <begin position="145"/>
        <end position="324"/>
    </location>
</feature>
<feature type="domain" description="C2 tensin-type" evidence="1">
    <location>
        <begin position="331"/>
        <end position="458"/>
    </location>
</feature>
<feature type="region of interest" description="Disordered" evidence="4">
    <location>
        <begin position="1"/>
        <end position="42"/>
    </location>
</feature>
<feature type="region of interest" description="Disordered" evidence="4">
    <location>
        <begin position="87"/>
        <end position="109"/>
    </location>
</feature>
<feature type="region of interest" description="Disordered" evidence="4">
    <location>
        <begin position="462"/>
        <end position="589"/>
    </location>
</feature>
<feature type="compositionally biased region" description="Low complexity" evidence="4">
    <location>
        <begin position="100"/>
        <end position="109"/>
    </location>
</feature>
<feature type="compositionally biased region" description="Polar residues" evidence="4">
    <location>
        <begin position="462"/>
        <end position="486"/>
    </location>
</feature>
<feature type="compositionally biased region" description="Basic and acidic residues" evidence="4">
    <location>
        <begin position="495"/>
        <end position="507"/>
    </location>
</feature>
<feature type="compositionally biased region" description="Polar residues" evidence="4">
    <location>
        <begin position="514"/>
        <end position="530"/>
    </location>
</feature>
<feature type="compositionally biased region" description="Polar residues" evidence="4">
    <location>
        <begin position="549"/>
        <end position="565"/>
    </location>
</feature>
<feature type="active site" description="Phosphocysteine intermediate" evidence="2 5">
    <location>
        <position position="263"/>
    </location>
</feature>
<feature type="modified residue" description="Phosphoserine" evidence="12">
    <location>
        <position position="91"/>
    </location>
</feature>
<feature type="modified residue" description="Phosphoserine" evidence="12">
    <location>
        <position position="509"/>
    </location>
</feature>
<feature type="mutagenesis site" description="Loss of phosphatase activity." evidence="5">
    <original>C</original>
    <variation>S</variation>
    <location>
        <position position="263"/>
    </location>
</feature>
<feature type="mutagenesis site" description="Reduced phosphatase activity toward PtdIns(3)P and PtdIns(4)P, but strongly increased activity for PtdIns(3,4)P(2), PtdIns(3,5)P(2) and PtdIns(3,4,5)P(3) as substrates." evidence="5">
    <original>MA</original>
    <variation>KG</variation>
    <location>
        <begin position="267"/>
        <end position="268"/>
    </location>
</feature>
<feature type="sequence conflict" description="In Ref. 1; AAO13749." evidence="9" ref="1">
    <original>HPPPP</original>
    <variation>PPPPL</variation>
    <location>
        <begin position="19"/>
        <end position="23"/>
    </location>
</feature>